<accession>Q8ZBN7</accession>
<accession>Q0WBS5</accession>
<accession>Q74XS4</accession>
<accession>Q7CKC9</accession>
<protein>
    <recommendedName>
        <fullName evidence="1">Sulfite reductase [NADPH] hemoprotein beta-component</fullName>
        <shortName evidence="1">SiR-HP</shortName>
        <shortName evidence="1">SiRHP</shortName>
        <ecNumber evidence="1">1.8.1.2</ecNumber>
    </recommendedName>
</protein>
<comment type="function">
    <text evidence="1">Component of the sulfite reductase complex that catalyzes the 6-electron reduction of sulfite to sulfide. This is one of several activities required for the biosynthesis of L-cysteine from sulfate.</text>
</comment>
<comment type="catalytic activity">
    <reaction evidence="1">
        <text>hydrogen sulfide + 3 NADP(+) + 3 H2O = sulfite + 3 NADPH + 4 H(+)</text>
        <dbReference type="Rhea" id="RHEA:13801"/>
        <dbReference type="ChEBI" id="CHEBI:15377"/>
        <dbReference type="ChEBI" id="CHEBI:15378"/>
        <dbReference type="ChEBI" id="CHEBI:17359"/>
        <dbReference type="ChEBI" id="CHEBI:29919"/>
        <dbReference type="ChEBI" id="CHEBI:57783"/>
        <dbReference type="ChEBI" id="CHEBI:58349"/>
        <dbReference type="EC" id="1.8.1.2"/>
    </reaction>
</comment>
<comment type="cofactor">
    <cofactor evidence="1">
        <name>siroheme</name>
        <dbReference type="ChEBI" id="CHEBI:60052"/>
    </cofactor>
    <text evidence="1">Binds 1 siroheme per subunit.</text>
</comment>
<comment type="cofactor">
    <cofactor evidence="1">
        <name>[4Fe-4S] cluster</name>
        <dbReference type="ChEBI" id="CHEBI:49883"/>
    </cofactor>
    <text evidence="1">Binds 1 [4Fe-4S] cluster per subunit.</text>
</comment>
<comment type="pathway">
    <text evidence="1">Sulfur metabolism; hydrogen sulfide biosynthesis; hydrogen sulfide from sulfite (NADPH route): step 1/1.</text>
</comment>
<comment type="subunit">
    <text evidence="1">Alpha(8)-beta(8). The alpha component is a flavoprotein, the beta component is a hemoprotein.</text>
</comment>
<comment type="similarity">
    <text evidence="1">Belongs to the nitrite and sulfite reductase 4Fe-4S domain family.</text>
</comment>
<sequence length="576" mass="64076">MNEKHPGPLVVSGKLSDGERMKSESNFLRGTIAEDLNNGLTGGFSGDNFLLIRFHGMYQQDDRDIRAERAEQKLEPRHAMMLRCRLPGGIITPQQWLGIDKFAADNTLYGSIRITNRQTFQFHGILKGNVKPAHQLLNELGLDALATANDVNRNVLCTSNPVESALHQEAYEWAKKISEHLLPRTRAYAEIWLDAEKVATTDEEPILGATYLPRKFKTTVVIPPQNDVDLHANDLNFVAVADKGKLIGFNVLVGGGLSIAHGDKNTYPRKASEFGYIPLKHTLAIAEAVVTTQRDWGNRTDRKNAKTKYTLERVGVETFKAEVEKRAGVSFSAIKPYQFIGRGDRIGWVKGVDKKWHLTLFVENGRLLDYPGRSLKTGVAEIAKIHQGDFRLTANQNLIVAGVPEKDKARIEALAREHGLMDDNVTSQRENSMACVSFPTCPLAMAEAERFLPEFVTRVEGILQQHGLADEHIVLRVTGCPNGCGRALLAEVGLVGKAVGRYNLHLGGNREGTRIPRMYRENITADEILLITDQLVGRWAKERHVDEGFGDFVIRAGVIAPVIDSARDFYDVQEAM</sequence>
<gene>
    <name evidence="1" type="primary">cysI</name>
    <name type="ordered locus">YPO3371</name>
    <name type="ordered locus">y0819</name>
    <name type="ordered locus">YP_0315</name>
</gene>
<dbReference type="EC" id="1.8.1.2" evidence="1"/>
<dbReference type="EMBL" id="AL590842">
    <property type="protein sequence ID" value="CAL21960.1"/>
    <property type="molecule type" value="Genomic_DNA"/>
</dbReference>
<dbReference type="EMBL" id="AE009952">
    <property type="protein sequence ID" value="AAM84406.1"/>
    <property type="molecule type" value="Genomic_DNA"/>
</dbReference>
<dbReference type="EMBL" id="AE017042">
    <property type="protein sequence ID" value="AAS60590.1"/>
    <property type="molecule type" value="Genomic_DNA"/>
</dbReference>
<dbReference type="PIR" id="AE0409">
    <property type="entry name" value="AE0409"/>
</dbReference>
<dbReference type="RefSeq" id="WP_002209382.1">
    <property type="nucleotide sequence ID" value="NZ_WUCL01000003.1"/>
</dbReference>
<dbReference type="RefSeq" id="YP_002348263.1">
    <property type="nucleotide sequence ID" value="NC_003143.1"/>
</dbReference>
<dbReference type="SMR" id="Q8ZBN7"/>
<dbReference type="STRING" id="214092.YPO3371"/>
<dbReference type="PaxDb" id="214092-YPO3371"/>
<dbReference type="DNASU" id="1145766"/>
<dbReference type="EnsemblBacteria" id="AAS60590">
    <property type="protein sequence ID" value="AAS60590"/>
    <property type="gene ID" value="YP_0315"/>
</dbReference>
<dbReference type="GeneID" id="57975337"/>
<dbReference type="KEGG" id="ype:YPO3371"/>
<dbReference type="KEGG" id="ypk:y0819"/>
<dbReference type="KEGG" id="ypm:YP_0315"/>
<dbReference type="PATRIC" id="fig|214092.21.peg.3851"/>
<dbReference type="eggNOG" id="COG0155">
    <property type="taxonomic scope" value="Bacteria"/>
</dbReference>
<dbReference type="HOGENOM" id="CLU_001975_3_2_6"/>
<dbReference type="OMA" id="IKISGCM"/>
<dbReference type="OrthoDB" id="3189055at2"/>
<dbReference type="UniPathway" id="UPA00140">
    <property type="reaction ID" value="UER00207"/>
</dbReference>
<dbReference type="Proteomes" id="UP000000815">
    <property type="component" value="Chromosome"/>
</dbReference>
<dbReference type="Proteomes" id="UP000001019">
    <property type="component" value="Chromosome"/>
</dbReference>
<dbReference type="Proteomes" id="UP000002490">
    <property type="component" value="Chromosome"/>
</dbReference>
<dbReference type="GO" id="GO:0009337">
    <property type="term" value="C:sulfite reductase complex (NADPH)"/>
    <property type="evidence" value="ECO:0000318"/>
    <property type="project" value="GO_Central"/>
</dbReference>
<dbReference type="GO" id="GO:0051539">
    <property type="term" value="F:4 iron, 4 sulfur cluster binding"/>
    <property type="evidence" value="ECO:0007669"/>
    <property type="project" value="UniProtKB-KW"/>
</dbReference>
<dbReference type="GO" id="GO:0020037">
    <property type="term" value="F:heme binding"/>
    <property type="evidence" value="ECO:0007669"/>
    <property type="project" value="InterPro"/>
</dbReference>
<dbReference type="GO" id="GO:0046872">
    <property type="term" value="F:metal ion binding"/>
    <property type="evidence" value="ECO:0007669"/>
    <property type="project" value="UniProtKB-KW"/>
</dbReference>
<dbReference type="GO" id="GO:0050661">
    <property type="term" value="F:NADP binding"/>
    <property type="evidence" value="ECO:0007669"/>
    <property type="project" value="InterPro"/>
</dbReference>
<dbReference type="GO" id="GO:0004783">
    <property type="term" value="F:sulfite reductase (NADPH) activity"/>
    <property type="evidence" value="ECO:0007669"/>
    <property type="project" value="UniProtKB-UniRule"/>
</dbReference>
<dbReference type="GO" id="GO:0019344">
    <property type="term" value="P:cysteine biosynthetic process"/>
    <property type="evidence" value="ECO:0007669"/>
    <property type="project" value="UniProtKB-KW"/>
</dbReference>
<dbReference type="GO" id="GO:0070814">
    <property type="term" value="P:hydrogen sulfide biosynthetic process"/>
    <property type="evidence" value="ECO:0007669"/>
    <property type="project" value="UniProtKB-UniRule"/>
</dbReference>
<dbReference type="GO" id="GO:0000103">
    <property type="term" value="P:sulfate assimilation"/>
    <property type="evidence" value="ECO:0000318"/>
    <property type="project" value="GO_Central"/>
</dbReference>
<dbReference type="FunFam" id="3.30.413.10:FF:000003">
    <property type="entry name" value="Sulfite reductase [NADPH] hemoprotein beta-component"/>
    <property type="match status" value="1"/>
</dbReference>
<dbReference type="FunFam" id="3.30.413.10:FF:000004">
    <property type="entry name" value="Sulfite reductase [NADPH] hemoprotein beta-component"/>
    <property type="match status" value="1"/>
</dbReference>
<dbReference type="Gene3D" id="3.30.413.10">
    <property type="entry name" value="Sulfite Reductase Hemoprotein, domain 1"/>
    <property type="match status" value="2"/>
</dbReference>
<dbReference type="HAMAP" id="MF_01540">
    <property type="entry name" value="CysI"/>
    <property type="match status" value="1"/>
</dbReference>
<dbReference type="InterPro" id="IPR011786">
    <property type="entry name" value="CysI"/>
</dbReference>
<dbReference type="InterPro" id="IPR005117">
    <property type="entry name" value="NiRdtase/SiRdtase_haem-b_fer"/>
</dbReference>
<dbReference type="InterPro" id="IPR036136">
    <property type="entry name" value="Nit/Sulf_reduc_fer-like_dom_sf"/>
</dbReference>
<dbReference type="InterPro" id="IPR006067">
    <property type="entry name" value="NO2/SO3_Rdtase_4Fe4S_dom"/>
</dbReference>
<dbReference type="InterPro" id="IPR045169">
    <property type="entry name" value="NO2/SO3_Rdtase_4Fe4S_prot"/>
</dbReference>
<dbReference type="InterPro" id="IPR045854">
    <property type="entry name" value="NO2/SO3_Rdtase_4Fe4S_sf"/>
</dbReference>
<dbReference type="InterPro" id="IPR006066">
    <property type="entry name" value="NO2/SO3_Rdtase_FeS/sirohaem_BS"/>
</dbReference>
<dbReference type="NCBIfam" id="TIGR02041">
    <property type="entry name" value="CysI"/>
    <property type="match status" value="1"/>
</dbReference>
<dbReference type="NCBIfam" id="NF010029">
    <property type="entry name" value="PRK13504.1"/>
    <property type="match status" value="1"/>
</dbReference>
<dbReference type="PANTHER" id="PTHR11493:SF47">
    <property type="entry name" value="SULFITE REDUCTASE [NADPH] SUBUNIT BETA"/>
    <property type="match status" value="1"/>
</dbReference>
<dbReference type="PANTHER" id="PTHR11493">
    <property type="entry name" value="SULFITE REDUCTASE [NADPH] SUBUNIT BETA-RELATED"/>
    <property type="match status" value="1"/>
</dbReference>
<dbReference type="Pfam" id="PF01077">
    <property type="entry name" value="NIR_SIR"/>
    <property type="match status" value="1"/>
</dbReference>
<dbReference type="Pfam" id="PF03460">
    <property type="entry name" value="NIR_SIR_ferr"/>
    <property type="match status" value="2"/>
</dbReference>
<dbReference type="PRINTS" id="PR00397">
    <property type="entry name" value="SIROHAEM"/>
</dbReference>
<dbReference type="SUPFAM" id="SSF56014">
    <property type="entry name" value="Nitrite and sulphite reductase 4Fe-4S domain-like"/>
    <property type="match status" value="2"/>
</dbReference>
<dbReference type="SUPFAM" id="SSF55124">
    <property type="entry name" value="Nitrite/Sulfite reductase N-terminal domain-like"/>
    <property type="match status" value="2"/>
</dbReference>
<dbReference type="PROSITE" id="PS00365">
    <property type="entry name" value="NIR_SIR"/>
    <property type="match status" value="1"/>
</dbReference>
<feature type="chain" id="PRO_0000199917" description="Sulfite reductase [NADPH] hemoprotein beta-component">
    <location>
        <begin position="1"/>
        <end position="576"/>
    </location>
</feature>
<feature type="binding site" evidence="1">
    <location>
        <position position="435"/>
    </location>
    <ligand>
        <name>[4Fe-4S] cluster</name>
        <dbReference type="ChEBI" id="CHEBI:49883"/>
    </ligand>
</feature>
<feature type="binding site" evidence="1">
    <location>
        <position position="441"/>
    </location>
    <ligand>
        <name>[4Fe-4S] cluster</name>
        <dbReference type="ChEBI" id="CHEBI:49883"/>
    </ligand>
</feature>
<feature type="binding site" evidence="1">
    <location>
        <position position="480"/>
    </location>
    <ligand>
        <name>[4Fe-4S] cluster</name>
        <dbReference type="ChEBI" id="CHEBI:49883"/>
    </ligand>
</feature>
<feature type="binding site" evidence="1">
    <location>
        <position position="484"/>
    </location>
    <ligand>
        <name>[4Fe-4S] cluster</name>
        <dbReference type="ChEBI" id="CHEBI:49883"/>
    </ligand>
</feature>
<feature type="binding site" description="axial binding residue" evidence="1">
    <location>
        <position position="484"/>
    </location>
    <ligand>
        <name>siroheme</name>
        <dbReference type="ChEBI" id="CHEBI:60052"/>
    </ligand>
    <ligandPart>
        <name>Fe</name>
        <dbReference type="ChEBI" id="CHEBI:18248"/>
    </ligandPart>
</feature>
<keyword id="KW-0004">4Fe-4S</keyword>
<keyword id="KW-0028">Amino-acid biosynthesis</keyword>
<keyword id="KW-0198">Cysteine biosynthesis</keyword>
<keyword id="KW-0349">Heme</keyword>
<keyword id="KW-0408">Iron</keyword>
<keyword id="KW-0411">Iron-sulfur</keyword>
<keyword id="KW-0479">Metal-binding</keyword>
<keyword id="KW-0521">NADP</keyword>
<keyword id="KW-0560">Oxidoreductase</keyword>
<keyword id="KW-1185">Reference proteome</keyword>
<organism>
    <name type="scientific">Yersinia pestis</name>
    <dbReference type="NCBI Taxonomy" id="632"/>
    <lineage>
        <taxon>Bacteria</taxon>
        <taxon>Pseudomonadati</taxon>
        <taxon>Pseudomonadota</taxon>
        <taxon>Gammaproteobacteria</taxon>
        <taxon>Enterobacterales</taxon>
        <taxon>Yersiniaceae</taxon>
        <taxon>Yersinia</taxon>
    </lineage>
</organism>
<reference key="1">
    <citation type="journal article" date="2001" name="Nature">
        <title>Genome sequence of Yersinia pestis, the causative agent of plague.</title>
        <authorList>
            <person name="Parkhill J."/>
            <person name="Wren B.W."/>
            <person name="Thomson N.R."/>
            <person name="Titball R.W."/>
            <person name="Holden M.T.G."/>
            <person name="Prentice M.B."/>
            <person name="Sebaihia M."/>
            <person name="James K.D."/>
            <person name="Churcher C.M."/>
            <person name="Mungall K.L."/>
            <person name="Baker S."/>
            <person name="Basham D."/>
            <person name="Bentley S.D."/>
            <person name="Brooks K."/>
            <person name="Cerdeno-Tarraga A.-M."/>
            <person name="Chillingworth T."/>
            <person name="Cronin A."/>
            <person name="Davies R.M."/>
            <person name="Davis P."/>
            <person name="Dougan G."/>
            <person name="Feltwell T."/>
            <person name="Hamlin N."/>
            <person name="Holroyd S."/>
            <person name="Jagels K."/>
            <person name="Karlyshev A.V."/>
            <person name="Leather S."/>
            <person name="Moule S."/>
            <person name="Oyston P.C.F."/>
            <person name="Quail M.A."/>
            <person name="Rutherford K.M."/>
            <person name="Simmonds M."/>
            <person name="Skelton J."/>
            <person name="Stevens K."/>
            <person name="Whitehead S."/>
            <person name="Barrell B.G."/>
        </authorList>
    </citation>
    <scope>NUCLEOTIDE SEQUENCE [LARGE SCALE GENOMIC DNA]</scope>
    <source>
        <strain>CO-92 / Biovar Orientalis</strain>
    </source>
</reference>
<reference key="2">
    <citation type="journal article" date="2002" name="J. Bacteriol.">
        <title>Genome sequence of Yersinia pestis KIM.</title>
        <authorList>
            <person name="Deng W."/>
            <person name="Burland V."/>
            <person name="Plunkett G. III"/>
            <person name="Boutin A."/>
            <person name="Mayhew G.F."/>
            <person name="Liss P."/>
            <person name="Perna N.T."/>
            <person name="Rose D.J."/>
            <person name="Mau B."/>
            <person name="Zhou S."/>
            <person name="Schwartz D.C."/>
            <person name="Fetherston J.D."/>
            <person name="Lindler L.E."/>
            <person name="Brubaker R.R."/>
            <person name="Plano G.V."/>
            <person name="Straley S.C."/>
            <person name="McDonough K.A."/>
            <person name="Nilles M.L."/>
            <person name="Matson J.S."/>
            <person name="Blattner F.R."/>
            <person name="Perry R.D."/>
        </authorList>
    </citation>
    <scope>NUCLEOTIDE SEQUENCE [LARGE SCALE GENOMIC DNA]</scope>
    <source>
        <strain>KIM10+ / Biovar Mediaevalis</strain>
    </source>
</reference>
<reference key="3">
    <citation type="journal article" date="2004" name="DNA Res.">
        <title>Complete genome sequence of Yersinia pestis strain 91001, an isolate avirulent to humans.</title>
        <authorList>
            <person name="Song Y."/>
            <person name="Tong Z."/>
            <person name="Wang J."/>
            <person name="Wang L."/>
            <person name="Guo Z."/>
            <person name="Han Y."/>
            <person name="Zhang J."/>
            <person name="Pei D."/>
            <person name="Zhou D."/>
            <person name="Qin H."/>
            <person name="Pang X."/>
            <person name="Han Y."/>
            <person name="Zhai J."/>
            <person name="Li M."/>
            <person name="Cui B."/>
            <person name="Qi Z."/>
            <person name="Jin L."/>
            <person name="Dai R."/>
            <person name="Chen F."/>
            <person name="Li S."/>
            <person name="Ye C."/>
            <person name="Du Z."/>
            <person name="Lin W."/>
            <person name="Wang J."/>
            <person name="Yu J."/>
            <person name="Yang H."/>
            <person name="Wang J."/>
            <person name="Huang P."/>
            <person name="Yang R."/>
        </authorList>
    </citation>
    <scope>NUCLEOTIDE SEQUENCE [LARGE SCALE GENOMIC DNA]</scope>
    <source>
        <strain>91001 / Biovar Mediaevalis</strain>
    </source>
</reference>
<evidence type="ECO:0000255" key="1">
    <source>
        <dbReference type="HAMAP-Rule" id="MF_01540"/>
    </source>
</evidence>
<proteinExistence type="inferred from homology"/>
<name>CYSI_YERPE</name>